<proteinExistence type="inferred from homology"/>
<evidence type="ECO:0000255" key="1">
    <source>
        <dbReference type="HAMAP-Rule" id="MF_01084"/>
    </source>
</evidence>
<comment type="function">
    <text evidence="1">S-adenosyl-L-methionine-dependent methyltransferase that catalyzes the trimethylation of the amino group of the modified target histidine residue in translation elongation factor 2 (EF-2), to form an intermediate called diphthine. The three successive methylation reactions represent the second step of diphthamide biosynthesis.</text>
</comment>
<comment type="catalytic activity">
    <reaction evidence="1">
        <text>2-[(3S)-amino-3-carboxypropyl]-L-histidyl-[translation elongation factor 2] + 3 S-adenosyl-L-methionine = diphthine-[translation elongation factor 2] + 3 S-adenosyl-L-homocysteine + 3 H(+)</text>
        <dbReference type="Rhea" id="RHEA:36415"/>
        <dbReference type="Rhea" id="RHEA-COMP:9749"/>
        <dbReference type="Rhea" id="RHEA-COMP:10172"/>
        <dbReference type="ChEBI" id="CHEBI:15378"/>
        <dbReference type="ChEBI" id="CHEBI:57856"/>
        <dbReference type="ChEBI" id="CHEBI:59789"/>
        <dbReference type="ChEBI" id="CHEBI:73995"/>
        <dbReference type="ChEBI" id="CHEBI:82696"/>
        <dbReference type="EC" id="2.1.1.98"/>
    </reaction>
</comment>
<comment type="pathway">
    <text evidence="1">Protein modification; peptidyl-diphthamide biosynthesis.</text>
</comment>
<comment type="subunit">
    <text evidence="1">Homodimer.</text>
</comment>
<comment type="similarity">
    <text evidence="1">Belongs to the diphthine synthase family.</text>
</comment>
<organism>
    <name type="scientific">Methanospirillum hungatei JF-1 (strain ATCC 27890 / DSM 864 / NBRC 100397 / JF-1)</name>
    <dbReference type="NCBI Taxonomy" id="323259"/>
    <lineage>
        <taxon>Archaea</taxon>
        <taxon>Methanobacteriati</taxon>
        <taxon>Methanobacteriota</taxon>
        <taxon>Stenosarchaea group</taxon>
        <taxon>Methanomicrobia</taxon>
        <taxon>Methanomicrobiales</taxon>
        <taxon>Methanospirillaceae</taxon>
        <taxon>Methanospirillum</taxon>
    </lineage>
</organism>
<accession>Q2FQ45</accession>
<protein>
    <recommendedName>
        <fullName evidence="1">Diphthine synthase</fullName>
        <ecNumber evidence="1">2.1.1.98</ecNumber>
    </recommendedName>
    <alternativeName>
        <fullName evidence="1">Diphthamide biosynthesis methyltransferase</fullName>
    </alternativeName>
</protein>
<name>DPHB_METHJ</name>
<keyword id="KW-0489">Methyltransferase</keyword>
<keyword id="KW-1185">Reference proteome</keyword>
<keyword id="KW-0949">S-adenosyl-L-methionine</keyword>
<keyword id="KW-0808">Transferase</keyword>
<dbReference type="EC" id="2.1.1.98" evidence="1"/>
<dbReference type="EMBL" id="CP000254">
    <property type="protein sequence ID" value="ABD40540.1"/>
    <property type="molecule type" value="Genomic_DNA"/>
</dbReference>
<dbReference type="RefSeq" id="WP_011447819.1">
    <property type="nucleotide sequence ID" value="NC_007796.1"/>
</dbReference>
<dbReference type="SMR" id="Q2FQ45"/>
<dbReference type="FunCoup" id="Q2FQ45">
    <property type="interactions" value="177"/>
</dbReference>
<dbReference type="STRING" id="323259.Mhun_0788"/>
<dbReference type="EnsemblBacteria" id="ABD40540">
    <property type="protein sequence ID" value="ABD40540"/>
    <property type="gene ID" value="Mhun_0788"/>
</dbReference>
<dbReference type="GeneID" id="3924516"/>
<dbReference type="KEGG" id="mhu:Mhun_0788"/>
<dbReference type="eggNOG" id="arCOG04161">
    <property type="taxonomic scope" value="Archaea"/>
</dbReference>
<dbReference type="HOGENOM" id="CLU_066040_0_0_2"/>
<dbReference type="InParanoid" id="Q2FQ45"/>
<dbReference type="OrthoDB" id="39139at2157"/>
<dbReference type="UniPathway" id="UPA00559"/>
<dbReference type="Proteomes" id="UP000001941">
    <property type="component" value="Chromosome"/>
</dbReference>
<dbReference type="GO" id="GO:0004164">
    <property type="term" value="F:diphthine synthase activity"/>
    <property type="evidence" value="ECO:0007669"/>
    <property type="project" value="UniProtKB-UniRule"/>
</dbReference>
<dbReference type="GO" id="GO:0032259">
    <property type="term" value="P:methylation"/>
    <property type="evidence" value="ECO:0007669"/>
    <property type="project" value="UniProtKB-KW"/>
</dbReference>
<dbReference type="GO" id="GO:0017183">
    <property type="term" value="P:protein histidyl modification to diphthamide"/>
    <property type="evidence" value="ECO:0007669"/>
    <property type="project" value="UniProtKB-UniRule"/>
</dbReference>
<dbReference type="CDD" id="cd11647">
    <property type="entry name" value="DHP5_DphB"/>
    <property type="match status" value="1"/>
</dbReference>
<dbReference type="Gene3D" id="3.40.1010.10">
    <property type="entry name" value="Cobalt-precorrin-4 Transmethylase, Domain 1"/>
    <property type="match status" value="1"/>
</dbReference>
<dbReference type="Gene3D" id="3.30.950.10">
    <property type="entry name" value="Methyltransferase, Cobalt-precorrin-4 Transmethylase, Domain 2"/>
    <property type="match status" value="1"/>
</dbReference>
<dbReference type="HAMAP" id="MF_01084">
    <property type="entry name" value="Diphthine_synth"/>
    <property type="match status" value="1"/>
</dbReference>
<dbReference type="InterPro" id="IPR000878">
    <property type="entry name" value="4pyrrol_Mease"/>
</dbReference>
<dbReference type="InterPro" id="IPR035996">
    <property type="entry name" value="4pyrrol_Methylase_sf"/>
</dbReference>
<dbReference type="InterPro" id="IPR014777">
    <property type="entry name" value="4pyrrole_Mease_sub1"/>
</dbReference>
<dbReference type="InterPro" id="IPR014776">
    <property type="entry name" value="4pyrrole_Mease_sub2"/>
</dbReference>
<dbReference type="InterPro" id="IPR004551">
    <property type="entry name" value="Dphthn_synthase"/>
</dbReference>
<dbReference type="NCBIfam" id="TIGR00522">
    <property type="entry name" value="dph5"/>
    <property type="match status" value="1"/>
</dbReference>
<dbReference type="PANTHER" id="PTHR10882:SF0">
    <property type="entry name" value="DIPHTHINE METHYL ESTER SYNTHASE"/>
    <property type="match status" value="1"/>
</dbReference>
<dbReference type="PANTHER" id="PTHR10882">
    <property type="entry name" value="DIPHTHINE SYNTHASE"/>
    <property type="match status" value="1"/>
</dbReference>
<dbReference type="Pfam" id="PF00590">
    <property type="entry name" value="TP_methylase"/>
    <property type="match status" value="1"/>
</dbReference>
<dbReference type="PIRSF" id="PIRSF036432">
    <property type="entry name" value="Diphthine_synth"/>
    <property type="match status" value="1"/>
</dbReference>
<dbReference type="SUPFAM" id="SSF53790">
    <property type="entry name" value="Tetrapyrrole methylase"/>
    <property type="match status" value="1"/>
</dbReference>
<gene>
    <name evidence="1" type="primary">dphB</name>
    <name type="ordered locus">Mhun_0788</name>
</gene>
<reference key="1">
    <citation type="journal article" date="2016" name="Stand. Genomic Sci.">
        <title>Complete genome sequence of Methanospirillum hungatei type strain JF1.</title>
        <authorList>
            <person name="Gunsalus R.P."/>
            <person name="Cook L.E."/>
            <person name="Crable B."/>
            <person name="Rohlin L."/>
            <person name="McDonald E."/>
            <person name="Mouttaki H."/>
            <person name="Sieber J.R."/>
            <person name="Poweleit N."/>
            <person name="Zhou H."/>
            <person name="Lapidus A.L."/>
            <person name="Daligault H.E."/>
            <person name="Land M."/>
            <person name="Gilna P."/>
            <person name="Ivanova N."/>
            <person name="Kyrpides N."/>
            <person name="Culley D.E."/>
            <person name="McInerney M.J."/>
        </authorList>
    </citation>
    <scope>NUCLEOTIDE SEQUENCE [LARGE SCALE GENOMIC DNA]</scope>
    <source>
        <strain>ATCC 27890 / DSM 864 / NBRC 100397 / JF-1</strain>
    </source>
</reference>
<feature type="chain" id="PRO_1000064819" description="Diphthine synthase">
    <location>
        <begin position="1"/>
        <end position="252"/>
    </location>
</feature>
<feature type="binding site" evidence="1">
    <location>
        <position position="9"/>
    </location>
    <ligand>
        <name>S-adenosyl-L-methionine</name>
        <dbReference type="ChEBI" id="CHEBI:59789"/>
    </ligand>
</feature>
<feature type="binding site" evidence="1">
    <location>
        <position position="85"/>
    </location>
    <ligand>
        <name>S-adenosyl-L-methionine</name>
        <dbReference type="ChEBI" id="CHEBI:59789"/>
    </ligand>
</feature>
<feature type="binding site" evidence="1">
    <location>
        <position position="88"/>
    </location>
    <ligand>
        <name>S-adenosyl-L-methionine</name>
        <dbReference type="ChEBI" id="CHEBI:59789"/>
    </ligand>
</feature>
<feature type="binding site" evidence="1">
    <location>
        <begin position="113"/>
        <end position="114"/>
    </location>
    <ligand>
        <name>S-adenosyl-L-methionine</name>
        <dbReference type="ChEBI" id="CHEBI:59789"/>
    </ligand>
</feature>
<feature type="binding site" evidence="1">
    <location>
        <position position="165"/>
    </location>
    <ligand>
        <name>S-adenosyl-L-methionine</name>
        <dbReference type="ChEBI" id="CHEBI:59789"/>
    </ligand>
</feature>
<feature type="binding site" evidence="1">
    <location>
        <position position="202"/>
    </location>
    <ligand>
        <name>S-adenosyl-L-methionine</name>
        <dbReference type="ChEBI" id="CHEBI:59789"/>
    </ligand>
</feature>
<feature type="binding site" evidence="1">
    <location>
        <position position="227"/>
    </location>
    <ligand>
        <name>S-adenosyl-L-methionine</name>
        <dbReference type="ChEBI" id="CHEBI:59789"/>
    </ligand>
</feature>
<sequence>MLIFVGLGLYDLDDISLKGLQAIKEADAVFLETYTSVLTGTTIEQMREKYGKDLIILKRQDVEQKPEPILTAAKNGIAVFLTGGDPMVSTTHADLRIRAHEQGIPTKIIHGSSIVSAVSGLTGLQNYRFGKSCSIPYPAPKWFPKTPLDTILANLKQNLHTIVYLDIQENRYMSVHEGIELLEKLMEGSTDSIPLFVGIARAGSNSPVVAAGSSERLKLVDFGPPLHILVVPASLHEIEEEYLKNFAGYDPQ</sequence>